<gene>
    <name evidence="1" type="primary">rsmF</name>
    <name type="ordered locus">SF1389.1</name>
    <name type="ordered locus">S1506</name>
</gene>
<name>RSMF_SHIFL</name>
<keyword id="KW-0963">Cytoplasm</keyword>
<keyword id="KW-0489">Methyltransferase</keyword>
<keyword id="KW-1185">Reference proteome</keyword>
<keyword id="KW-0694">RNA-binding</keyword>
<keyword id="KW-0698">rRNA processing</keyword>
<keyword id="KW-0949">S-adenosyl-L-methionine</keyword>
<keyword id="KW-0808">Transferase</keyword>
<evidence type="ECO:0000255" key="1">
    <source>
        <dbReference type="HAMAP-Rule" id="MF_01579"/>
    </source>
</evidence>
<evidence type="ECO:0000305" key="2"/>
<comment type="function">
    <text evidence="1">Specifically methylates the cytosine at position 1407 (m5C1407) of 16S rRNA.</text>
</comment>
<comment type="catalytic activity">
    <reaction evidence="1">
        <text>cytidine(1407) in 16S rRNA + S-adenosyl-L-methionine = 5-methylcytidine(1407) in 16S rRNA + S-adenosyl-L-homocysteine + H(+)</text>
        <dbReference type="Rhea" id="RHEA:42756"/>
        <dbReference type="Rhea" id="RHEA-COMP:10223"/>
        <dbReference type="Rhea" id="RHEA-COMP:10224"/>
        <dbReference type="ChEBI" id="CHEBI:15378"/>
        <dbReference type="ChEBI" id="CHEBI:57856"/>
        <dbReference type="ChEBI" id="CHEBI:59789"/>
        <dbReference type="ChEBI" id="CHEBI:74483"/>
        <dbReference type="ChEBI" id="CHEBI:82748"/>
        <dbReference type="EC" id="2.1.1.178"/>
    </reaction>
</comment>
<comment type="subcellular location">
    <subcellularLocation>
        <location evidence="1">Cytoplasm</location>
    </subcellularLocation>
</comment>
<comment type="similarity">
    <text evidence="1">Belongs to the class I-like SAM-binding methyltransferase superfamily. RsmB/NOP family.</text>
</comment>
<comment type="caution">
    <text evidence="2">Could be the product of a pseudogene.</text>
</comment>
<comment type="sequence caution" evidence="2">
    <conflict type="erroneous termination">
        <sequence resource="EMBL-CDS" id="AAN42992"/>
    </conflict>
    <text>Truncated C-terminus.</text>
</comment>
<comment type="sequence caution" evidence="2">
    <conflict type="erroneous termination">
        <sequence resource="EMBL" id="AE014073"/>
    </conflict>
    <text>Truncated C-terminus.</text>
</comment>
<proteinExistence type="uncertain"/>
<organism>
    <name type="scientific">Shigella flexneri</name>
    <dbReference type="NCBI Taxonomy" id="623"/>
    <lineage>
        <taxon>Bacteria</taxon>
        <taxon>Pseudomonadati</taxon>
        <taxon>Pseudomonadota</taxon>
        <taxon>Gammaproteobacteria</taxon>
        <taxon>Enterobacterales</taxon>
        <taxon>Enterobacteriaceae</taxon>
        <taxon>Shigella</taxon>
    </lineage>
</organism>
<feature type="chain" id="PRO_0000285019" description="Putative ribosomal RNA small subunit methyltransferase F">
    <location>
        <begin position="1"/>
        <end position="479"/>
    </location>
</feature>
<feature type="active site" description="Nucleophile" evidence="1">
    <location>
        <position position="247"/>
    </location>
</feature>
<feature type="binding site" evidence="1">
    <location>
        <begin position="125"/>
        <end position="131"/>
    </location>
    <ligand>
        <name>S-adenosyl-L-methionine</name>
        <dbReference type="ChEBI" id="CHEBI:59789"/>
    </ligand>
</feature>
<feature type="binding site" evidence="1">
    <location>
        <position position="149"/>
    </location>
    <ligand>
        <name>S-adenosyl-L-methionine</name>
        <dbReference type="ChEBI" id="CHEBI:59789"/>
    </ligand>
</feature>
<feature type="binding site" evidence="1">
    <location>
        <position position="177"/>
    </location>
    <ligand>
        <name>S-adenosyl-L-methionine</name>
        <dbReference type="ChEBI" id="CHEBI:59789"/>
    </ligand>
</feature>
<feature type="binding site" evidence="1">
    <location>
        <position position="194"/>
    </location>
    <ligand>
        <name>S-adenosyl-L-methionine</name>
        <dbReference type="ChEBI" id="CHEBI:59789"/>
    </ligand>
</feature>
<feature type="sequence conflict" description="In Ref. 2; AE014073." evidence="2" ref="2">
    <original>C</original>
    <variation>Y</variation>
    <location>
        <position position="247"/>
    </location>
</feature>
<dbReference type="EC" id="2.1.1.178" evidence="1"/>
<dbReference type="EMBL" id="AE005674">
    <property type="protein sequence ID" value="AAN42992.1"/>
    <property type="status" value="ALT_SEQ"/>
    <property type="molecule type" value="Genomic_DNA"/>
</dbReference>
<dbReference type="EMBL" id="AE014073">
    <property type="status" value="NOT_ANNOTATED_CDS"/>
    <property type="molecule type" value="Genomic_DNA"/>
</dbReference>
<dbReference type="RefSeq" id="WP_000057029.1">
    <property type="nucleotide sequence ID" value="NZ_UIPM01000081.1"/>
</dbReference>
<dbReference type="SMR" id="Q83RJ3"/>
<dbReference type="STRING" id="198214.SF1390"/>
<dbReference type="PaxDb" id="198214-SF1390"/>
<dbReference type="KEGG" id="sfl:SF1390"/>
<dbReference type="PATRIC" id="fig|198214.7.peg.1638"/>
<dbReference type="HOGENOM" id="CLU_005316_6_2_6"/>
<dbReference type="Proteomes" id="UP000001006">
    <property type="component" value="Chromosome"/>
</dbReference>
<dbReference type="Proteomes" id="UP000002673">
    <property type="component" value="Chromosome"/>
</dbReference>
<dbReference type="GO" id="GO:0005737">
    <property type="term" value="C:cytoplasm"/>
    <property type="evidence" value="ECO:0007669"/>
    <property type="project" value="UniProtKB-SubCell"/>
</dbReference>
<dbReference type="GO" id="GO:0003723">
    <property type="term" value="F:RNA binding"/>
    <property type="evidence" value="ECO:0007669"/>
    <property type="project" value="UniProtKB-KW"/>
</dbReference>
<dbReference type="GO" id="GO:0009383">
    <property type="term" value="F:rRNA (cytosine-C5-)-methyltransferase activity"/>
    <property type="evidence" value="ECO:0007669"/>
    <property type="project" value="TreeGrafter"/>
</dbReference>
<dbReference type="GO" id="GO:0070475">
    <property type="term" value="P:rRNA base methylation"/>
    <property type="evidence" value="ECO:0007669"/>
    <property type="project" value="TreeGrafter"/>
</dbReference>
<dbReference type="FunFam" id="3.10.450.720:FF:000001">
    <property type="entry name" value="Ribosomal RNA small subunit methyltransferase F"/>
    <property type="match status" value="1"/>
</dbReference>
<dbReference type="FunFam" id="3.40.50.150:FF:000079">
    <property type="entry name" value="Ribosomal RNA small subunit methyltransferase F"/>
    <property type="match status" value="1"/>
</dbReference>
<dbReference type="Gene3D" id="3.10.450.720">
    <property type="match status" value="1"/>
</dbReference>
<dbReference type="Gene3D" id="3.40.50.150">
    <property type="entry name" value="Vaccinia Virus protein VP39"/>
    <property type="match status" value="1"/>
</dbReference>
<dbReference type="HAMAP" id="MF_01579">
    <property type="entry name" value="16SrRNA_methyltr_F"/>
    <property type="match status" value="1"/>
</dbReference>
<dbReference type="InterPro" id="IPR031341">
    <property type="entry name" value="Methyltr_RsmF_N"/>
</dbReference>
<dbReference type="InterPro" id="IPR049560">
    <property type="entry name" value="MeTrfase_RsmB-F_NOP2_cat"/>
</dbReference>
<dbReference type="InterPro" id="IPR001678">
    <property type="entry name" value="MeTrfase_RsmB-F_NOP2_dom"/>
</dbReference>
<dbReference type="InterPro" id="IPR027391">
    <property type="entry name" value="Nol1_Nop2_Fmu_2"/>
</dbReference>
<dbReference type="InterPro" id="IPR011023">
    <property type="entry name" value="Nop2p"/>
</dbReference>
<dbReference type="InterPro" id="IPR023267">
    <property type="entry name" value="RCMT"/>
</dbReference>
<dbReference type="InterPro" id="IPR023545">
    <property type="entry name" value="rRNA_ssu_MeTfrase_F"/>
</dbReference>
<dbReference type="InterPro" id="IPR018314">
    <property type="entry name" value="RsmB/NOL1/NOP2-like_CS"/>
</dbReference>
<dbReference type="InterPro" id="IPR029063">
    <property type="entry name" value="SAM-dependent_MTases_sf"/>
</dbReference>
<dbReference type="InterPro" id="IPR048457">
    <property type="entry name" value="YebU_pre-PUA_dom"/>
</dbReference>
<dbReference type="NCBIfam" id="TIGR00446">
    <property type="entry name" value="nop2p"/>
    <property type="match status" value="1"/>
</dbReference>
<dbReference type="NCBIfam" id="NF008898">
    <property type="entry name" value="PRK11933.1"/>
    <property type="match status" value="1"/>
</dbReference>
<dbReference type="PANTHER" id="PTHR22807:SF30">
    <property type="entry name" value="28S RRNA (CYTOSINE(4447)-C(5))-METHYLTRANSFERASE-RELATED"/>
    <property type="match status" value="1"/>
</dbReference>
<dbReference type="PANTHER" id="PTHR22807">
    <property type="entry name" value="NOP2 YEAST -RELATED NOL1/NOP2/FMU SUN DOMAIN-CONTAINING"/>
    <property type="match status" value="1"/>
</dbReference>
<dbReference type="Pfam" id="PF01189">
    <property type="entry name" value="Methyltr_RsmB-F"/>
    <property type="match status" value="1"/>
</dbReference>
<dbReference type="Pfam" id="PF17125">
    <property type="entry name" value="Methyltr_RsmF_N"/>
    <property type="match status" value="1"/>
</dbReference>
<dbReference type="Pfam" id="PF13636">
    <property type="entry name" value="Methyltranf_PUA"/>
    <property type="match status" value="1"/>
</dbReference>
<dbReference type="Pfam" id="PF21150">
    <property type="entry name" value="YebU_pre-PUA_dom"/>
    <property type="match status" value="1"/>
</dbReference>
<dbReference type="PRINTS" id="PR02008">
    <property type="entry name" value="RCMTFAMILY"/>
</dbReference>
<dbReference type="SUPFAM" id="SSF53335">
    <property type="entry name" value="S-adenosyl-L-methionine-dependent methyltransferases"/>
    <property type="match status" value="1"/>
</dbReference>
<dbReference type="PROSITE" id="PS01153">
    <property type="entry name" value="NOL1_NOP2_SUN"/>
    <property type="match status" value="1"/>
</dbReference>
<dbReference type="PROSITE" id="PS51686">
    <property type="entry name" value="SAM_MT_RSMB_NOP"/>
    <property type="match status" value="1"/>
</dbReference>
<reference key="1">
    <citation type="journal article" date="2002" name="Nucleic Acids Res.">
        <title>Genome sequence of Shigella flexneri 2a: insights into pathogenicity through comparison with genomes of Escherichia coli K12 and O157.</title>
        <authorList>
            <person name="Jin Q."/>
            <person name="Yuan Z."/>
            <person name="Xu J."/>
            <person name="Wang Y."/>
            <person name="Shen Y."/>
            <person name="Lu W."/>
            <person name="Wang J."/>
            <person name="Liu H."/>
            <person name="Yang J."/>
            <person name="Yang F."/>
            <person name="Zhang X."/>
            <person name="Zhang J."/>
            <person name="Yang G."/>
            <person name="Wu H."/>
            <person name="Qu D."/>
            <person name="Dong J."/>
            <person name="Sun L."/>
            <person name="Xue Y."/>
            <person name="Zhao A."/>
            <person name="Gao Y."/>
            <person name="Zhu J."/>
            <person name="Kan B."/>
            <person name="Ding K."/>
            <person name="Chen S."/>
            <person name="Cheng H."/>
            <person name="Yao Z."/>
            <person name="He B."/>
            <person name="Chen R."/>
            <person name="Ma D."/>
            <person name="Qiang B."/>
            <person name="Wen Y."/>
            <person name="Hou Y."/>
            <person name="Yu J."/>
        </authorList>
    </citation>
    <scope>NUCLEOTIDE SEQUENCE [LARGE SCALE GENOMIC DNA]</scope>
    <source>
        <strain>301 / Serotype 2a</strain>
    </source>
</reference>
<reference key="2">
    <citation type="journal article" date="2003" name="Infect. Immun.">
        <title>Complete genome sequence and comparative genomics of Shigella flexneri serotype 2a strain 2457T.</title>
        <authorList>
            <person name="Wei J."/>
            <person name="Goldberg M.B."/>
            <person name="Burland V."/>
            <person name="Venkatesan M.M."/>
            <person name="Deng W."/>
            <person name="Fournier G."/>
            <person name="Mayhew G.F."/>
            <person name="Plunkett G. III"/>
            <person name="Rose D.J."/>
            <person name="Darling A."/>
            <person name="Mau B."/>
            <person name="Perna N.T."/>
            <person name="Payne S.M."/>
            <person name="Runyen-Janecky L.J."/>
            <person name="Zhou S."/>
            <person name="Schwartz D.C."/>
            <person name="Blattner F.R."/>
        </authorList>
    </citation>
    <scope>NUCLEOTIDE SEQUENCE [LARGE SCALE GENOMIC DNA]</scope>
    <source>
        <strain>ATCC 700930 / 2457T / Serotype 2a</strain>
    </source>
</reference>
<sequence length="479" mass="53293">MAQHTVYFPDAFLTQMREAMPSTLSFDDFLAACQRPLRRSIRVNTLKISVADFLQLTAPYGWTLTPIPWCEEGFWIERDNEDALPLGSTTEHLSGLFYIQEASSMLPVAALFADGNAPQRVMDVAAAPGSKTTQIAARMNNEGAILANEFSASWVKVLHANISRCGISNVALTHFGGRVFGAAVPEMFDAILLDAPCSGEGVVRKDPDALKNWSPESNQEIAATQRELIDSAFHALRPGGTLVYSTCTLNREENEAVCRWLKETYPDEVEFLPLGDLFPGANKALTEEGFLHVFPQIYDCEGFFVARLRKTQAIPALPAPKYKVGNFPFSPVKDREAGQIRQAAASVGLNWDGNLRLWQRDKELWLFPVGIEALIGKVRFSRLGIKLAETHNKGYRWQHEAVIAHASPDNVNAFELTPQEAEEWYRGRDVYPQAAPVADDVLVTFQHQPIGLAKRIGSRLKNSYPRELVRDGKLFTSNA</sequence>
<protein>
    <recommendedName>
        <fullName>Putative ribosomal RNA small subunit methyltransferase F</fullName>
        <ecNumber evidence="1">2.1.1.178</ecNumber>
    </recommendedName>
    <alternativeName>
        <fullName evidence="1">16S rRNA m5C1407 methyltransferase</fullName>
    </alternativeName>
    <alternativeName>
        <fullName evidence="1">rRNA (cytosine-C(5)-)-methyltransferase RsmF</fullName>
    </alternativeName>
</protein>
<accession>Q83RJ3</accession>